<organism>
    <name type="scientific">Pseudomonas fluorescens (strain Pf0-1)</name>
    <dbReference type="NCBI Taxonomy" id="205922"/>
    <lineage>
        <taxon>Bacteria</taxon>
        <taxon>Pseudomonadati</taxon>
        <taxon>Pseudomonadota</taxon>
        <taxon>Gammaproteobacteria</taxon>
        <taxon>Pseudomonadales</taxon>
        <taxon>Pseudomonadaceae</taxon>
        <taxon>Pseudomonas</taxon>
    </lineage>
</organism>
<comment type="function">
    <text evidence="1">May play a key role in the regulation of the intracellular concentration of adenosylhomocysteine.</text>
</comment>
<comment type="catalytic activity">
    <reaction evidence="1">
        <text>S-adenosyl-L-homocysteine + H2O = L-homocysteine + adenosine</text>
        <dbReference type="Rhea" id="RHEA:21708"/>
        <dbReference type="ChEBI" id="CHEBI:15377"/>
        <dbReference type="ChEBI" id="CHEBI:16335"/>
        <dbReference type="ChEBI" id="CHEBI:57856"/>
        <dbReference type="ChEBI" id="CHEBI:58199"/>
        <dbReference type="EC" id="3.13.2.1"/>
    </reaction>
</comment>
<comment type="cofactor">
    <cofactor evidence="1">
        <name>NAD(+)</name>
        <dbReference type="ChEBI" id="CHEBI:57540"/>
    </cofactor>
    <text evidence="1">Binds 1 NAD(+) per subunit.</text>
</comment>
<comment type="pathway">
    <text evidence="1">Amino-acid biosynthesis; L-homocysteine biosynthesis; L-homocysteine from S-adenosyl-L-homocysteine: step 1/1.</text>
</comment>
<comment type="subcellular location">
    <subcellularLocation>
        <location evidence="1">Cytoplasm</location>
    </subcellularLocation>
</comment>
<comment type="similarity">
    <text evidence="1">Belongs to the adenosylhomocysteinase family.</text>
</comment>
<name>SAHH_PSEPF</name>
<reference key="1">
    <citation type="journal article" date="2009" name="Genome Biol.">
        <title>Genomic and genetic analyses of diversity and plant interactions of Pseudomonas fluorescens.</title>
        <authorList>
            <person name="Silby M.W."/>
            <person name="Cerdeno-Tarraga A.M."/>
            <person name="Vernikos G.S."/>
            <person name="Giddens S.R."/>
            <person name="Jackson R.W."/>
            <person name="Preston G.M."/>
            <person name="Zhang X.-X."/>
            <person name="Moon C.D."/>
            <person name="Gehrig S.M."/>
            <person name="Godfrey S.A.C."/>
            <person name="Knight C.G."/>
            <person name="Malone J.G."/>
            <person name="Robinson Z."/>
            <person name="Spiers A.J."/>
            <person name="Harris S."/>
            <person name="Challis G.L."/>
            <person name="Yaxley A.M."/>
            <person name="Harris D."/>
            <person name="Seeger K."/>
            <person name="Murphy L."/>
            <person name="Rutter S."/>
            <person name="Squares R."/>
            <person name="Quail M.A."/>
            <person name="Saunders E."/>
            <person name="Mavromatis K."/>
            <person name="Brettin T.S."/>
            <person name="Bentley S.D."/>
            <person name="Hothersall J."/>
            <person name="Stephens E."/>
            <person name="Thomas C.M."/>
            <person name="Parkhill J."/>
            <person name="Levy S.B."/>
            <person name="Rainey P.B."/>
            <person name="Thomson N.R."/>
        </authorList>
    </citation>
    <scope>NUCLEOTIDE SEQUENCE [LARGE SCALE GENOMIC DNA]</scope>
    <source>
        <strain>Pf0-1</strain>
    </source>
</reference>
<protein>
    <recommendedName>
        <fullName evidence="1">Adenosylhomocysteinase</fullName>
        <ecNumber evidence="1">3.13.2.1</ecNumber>
    </recommendedName>
    <alternativeName>
        <fullName evidence="1">S-adenosyl-L-homocysteine hydrolase</fullName>
        <shortName evidence="1">AdoHcyase</shortName>
    </alternativeName>
</protein>
<keyword id="KW-0963">Cytoplasm</keyword>
<keyword id="KW-0378">Hydrolase</keyword>
<keyword id="KW-0520">NAD</keyword>
<keyword id="KW-0554">One-carbon metabolism</keyword>
<proteinExistence type="inferred from homology"/>
<accession>Q3K5D7</accession>
<feature type="chain" id="PRO_1000024753" description="Adenosylhomocysteinase">
    <location>
        <begin position="1"/>
        <end position="469"/>
    </location>
</feature>
<feature type="binding site" evidence="1">
    <location>
        <position position="63"/>
    </location>
    <ligand>
        <name>substrate</name>
    </ligand>
</feature>
<feature type="binding site" evidence="1">
    <location>
        <position position="139"/>
    </location>
    <ligand>
        <name>substrate</name>
    </ligand>
</feature>
<feature type="binding site" evidence="1">
    <location>
        <position position="164"/>
    </location>
    <ligand>
        <name>substrate</name>
    </ligand>
</feature>
<feature type="binding site" evidence="1">
    <location>
        <begin position="165"/>
        <end position="167"/>
    </location>
    <ligand>
        <name>NAD(+)</name>
        <dbReference type="ChEBI" id="CHEBI:57540"/>
    </ligand>
</feature>
<feature type="binding site" evidence="1">
    <location>
        <position position="194"/>
    </location>
    <ligand>
        <name>substrate</name>
    </ligand>
</feature>
<feature type="binding site" evidence="1">
    <location>
        <position position="198"/>
    </location>
    <ligand>
        <name>substrate</name>
    </ligand>
</feature>
<feature type="binding site" evidence="1">
    <location>
        <position position="199"/>
    </location>
    <ligand>
        <name>NAD(+)</name>
        <dbReference type="ChEBI" id="CHEBI:57540"/>
    </ligand>
</feature>
<feature type="binding site" evidence="1">
    <location>
        <begin position="228"/>
        <end position="233"/>
    </location>
    <ligand>
        <name>NAD(+)</name>
        <dbReference type="ChEBI" id="CHEBI:57540"/>
    </ligand>
</feature>
<feature type="binding site" evidence="1">
    <location>
        <position position="251"/>
    </location>
    <ligand>
        <name>NAD(+)</name>
        <dbReference type="ChEBI" id="CHEBI:57540"/>
    </ligand>
</feature>
<feature type="binding site" evidence="1">
    <location>
        <position position="300"/>
    </location>
    <ligand>
        <name>NAD(+)</name>
        <dbReference type="ChEBI" id="CHEBI:57540"/>
    </ligand>
</feature>
<feature type="binding site" evidence="1">
    <location>
        <begin position="321"/>
        <end position="323"/>
    </location>
    <ligand>
        <name>NAD(+)</name>
        <dbReference type="ChEBI" id="CHEBI:57540"/>
    </ligand>
</feature>
<feature type="binding site" evidence="1">
    <location>
        <position position="375"/>
    </location>
    <ligand>
        <name>NAD(+)</name>
        <dbReference type="ChEBI" id="CHEBI:57540"/>
    </ligand>
</feature>
<sequence>MSAVITPADFNDYKVADISLAAWGRRETIIAESEMPALMGLRRKYASEQPLKGAKILGCIHMTIQTAVLIETLVALGAEVRWSSCNIFSTQDQAAASIAAAGIPVFAWKGETEEEYEWCLEQTILKDGQPWDANMILDDGGDLTELLHKKYPQVLDRVHGVTEETTTGVHRLLDMLAKGELKIPAINVNDSVTKSKNDNKYGCRHSLNDAIKRGTDHLLSGKQALVIGYGDVGKGSAQSLRQEGMIVKVSEVDPICAMQACMDGFELVSPFIDGINDGTEASIDKALLGKIDLIVTTTGNVNVCDANMLKALKKRAVVCNIGHFDNEIDTAFMRKNWAWEEVKPQVHKIHRTGAGSFDPQNDDYLILLAEGRLVNLGNATGHPSRIMDGSFANQVLAQIFLFGQKYADLSPAQKAERLTVEVLPKKLDEEVALEMVRGFGGVVTQLTKQQADYIGVTVEGPFKPHAYRY</sequence>
<evidence type="ECO:0000255" key="1">
    <source>
        <dbReference type="HAMAP-Rule" id="MF_00563"/>
    </source>
</evidence>
<dbReference type="EC" id="3.13.2.1" evidence="1"/>
<dbReference type="EMBL" id="CP000094">
    <property type="protein sequence ID" value="ABA77017.1"/>
    <property type="molecule type" value="Genomic_DNA"/>
</dbReference>
<dbReference type="RefSeq" id="WP_011336339.1">
    <property type="nucleotide sequence ID" value="NC_007492.2"/>
</dbReference>
<dbReference type="SMR" id="Q3K5D7"/>
<dbReference type="KEGG" id="pfo:Pfl01_5280"/>
<dbReference type="eggNOG" id="COG0499">
    <property type="taxonomic scope" value="Bacteria"/>
</dbReference>
<dbReference type="HOGENOM" id="CLU_025194_2_1_6"/>
<dbReference type="UniPathway" id="UPA00314">
    <property type="reaction ID" value="UER00076"/>
</dbReference>
<dbReference type="Proteomes" id="UP000002704">
    <property type="component" value="Chromosome"/>
</dbReference>
<dbReference type="GO" id="GO:0005829">
    <property type="term" value="C:cytosol"/>
    <property type="evidence" value="ECO:0007669"/>
    <property type="project" value="TreeGrafter"/>
</dbReference>
<dbReference type="GO" id="GO:0004013">
    <property type="term" value="F:adenosylhomocysteinase activity"/>
    <property type="evidence" value="ECO:0007669"/>
    <property type="project" value="UniProtKB-UniRule"/>
</dbReference>
<dbReference type="GO" id="GO:0071269">
    <property type="term" value="P:L-homocysteine biosynthetic process"/>
    <property type="evidence" value="ECO:0007669"/>
    <property type="project" value="UniProtKB-UniRule"/>
</dbReference>
<dbReference type="GO" id="GO:0006730">
    <property type="term" value="P:one-carbon metabolic process"/>
    <property type="evidence" value="ECO:0007669"/>
    <property type="project" value="UniProtKB-KW"/>
</dbReference>
<dbReference type="GO" id="GO:0033353">
    <property type="term" value="P:S-adenosylmethionine cycle"/>
    <property type="evidence" value="ECO:0007669"/>
    <property type="project" value="TreeGrafter"/>
</dbReference>
<dbReference type="CDD" id="cd00401">
    <property type="entry name" value="SAHH"/>
    <property type="match status" value="1"/>
</dbReference>
<dbReference type="FunFam" id="3.40.50.1480:FF:000006">
    <property type="entry name" value="Adenosylhomocysteinase"/>
    <property type="match status" value="1"/>
</dbReference>
<dbReference type="FunFam" id="3.40.50.1480:FF:000007">
    <property type="entry name" value="Adenosylhomocysteinase"/>
    <property type="match status" value="1"/>
</dbReference>
<dbReference type="FunFam" id="3.40.50.720:FF:000155">
    <property type="entry name" value="Adenosylhomocysteinase"/>
    <property type="match status" value="1"/>
</dbReference>
<dbReference type="Gene3D" id="3.40.50.1480">
    <property type="entry name" value="Adenosylhomocysteinase-like"/>
    <property type="match status" value="3"/>
</dbReference>
<dbReference type="Gene3D" id="3.40.50.720">
    <property type="entry name" value="NAD(P)-binding Rossmann-like Domain"/>
    <property type="match status" value="1"/>
</dbReference>
<dbReference type="HAMAP" id="MF_00563">
    <property type="entry name" value="AdoHcyase"/>
    <property type="match status" value="1"/>
</dbReference>
<dbReference type="InterPro" id="IPR042172">
    <property type="entry name" value="Adenosylhomocyst_ase-like_sf"/>
</dbReference>
<dbReference type="InterPro" id="IPR000043">
    <property type="entry name" value="Adenosylhomocysteinase-like"/>
</dbReference>
<dbReference type="InterPro" id="IPR015878">
    <property type="entry name" value="Ado_hCys_hydrolase_NAD-bd"/>
</dbReference>
<dbReference type="InterPro" id="IPR036291">
    <property type="entry name" value="NAD(P)-bd_dom_sf"/>
</dbReference>
<dbReference type="InterPro" id="IPR020082">
    <property type="entry name" value="S-Ado-L-homoCys_hydrolase_CS"/>
</dbReference>
<dbReference type="NCBIfam" id="TIGR00936">
    <property type="entry name" value="ahcY"/>
    <property type="match status" value="1"/>
</dbReference>
<dbReference type="NCBIfam" id="NF004005">
    <property type="entry name" value="PRK05476.2-3"/>
    <property type="match status" value="1"/>
</dbReference>
<dbReference type="PANTHER" id="PTHR23420">
    <property type="entry name" value="ADENOSYLHOMOCYSTEINASE"/>
    <property type="match status" value="1"/>
</dbReference>
<dbReference type="PANTHER" id="PTHR23420:SF0">
    <property type="entry name" value="ADENOSYLHOMOCYSTEINASE"/>
    <property type="match status" value="1"/>
</dbReference>
<dbReference type="Pfam" id="PF05221">
    <property type="entry name" value="AdoHcyase"/>
    <property type="match status" value="1"/>
</dbReference>
<dbReference type="Pfam" id="PF00670">
    <property type="entry name" value="AdoHcyase_NAD"/>
    <property type="match status" value="1"/>
</dbReference>
<dbReference type="PIRSF" id="PIRSF001109">
    <property type="entry name" value="Ad_hcy_hydrolase"/>
    <property type="match status" value="1"/>
</dbReference>
<dbReference type="SMART" id="SM00996">
    <property type="entry name" value="AdoHcyase"/>
    <property type="match status" value="1"/>
</dbReference>
<dbReference type="SMART" id="SM00997">
    <property type="entry name" value="AdoHcyase_NAD"/>
    <property type="match status" value="1"/>
</dbReference>
<dbReference type="SUPFAM" id="SSF52283">
    <property type="entry name" value="Formate/glycerate dehydrogenase catalytic domain-like"/>
    <property type="match status" value="1"/>
</dbReference>
<dbReference type="SUPFAM" id="SSF51735">
    <property type="entry name" value="NAD(P)-binding Rossmann-fold domains"/>
    <property type="match status" value="1"/>
</dbReference>
<dbReference type="PROSITE" id="PS00738">
    <property type="entry name" value="ADOHCYASE_1"/>
    <property type="match status" value="1"/>
</dbReference>
<dbReference type="PROSITE" id="PS00739">
    <property type="entry name" value="ADOHCYASE_2"/>
    <property type="match status" value="1"/>
</dbReference>
<gene>
    <name evidence="1" type="primary">ahcY</name>
    <name type="ordered locus">Pfl01_5280</name>
</gene>